<organism>
    <name type="scientific">Streptomyces coelicolor (strain ATCC BAA-471 / A3(2) / M145)</name>
    <dbReference type="NCBI Taxonomy" id="100226"/>
    <lineage>
        <taxon>Bacteria</taxon>
        <taxon>Bacillati</taxon>
        <taxon>Actinomycetota</taxon>
        <taxon>Actinomycetes</taxon>
        <taxon>Kitasatosporales</taxon>
        <taxon>Streptomycetaceae</taxon>
        <taxon>Streptomyces</taxon>
        <taxon>Streptomyces albidoflavus group</taxon>
    </lineage>
</organism>
<proteinExistence type="inferred from homology"/>
<name>EFTS_STRCO</name>
<accession>O31213</accession>
<accession>O69912</accession>
<reference key="1">
    <citation type="journal article" date="1999" name="Microbiology">
        <title>Evidence that a single EF-Ts suffices for the recycling of multiple and divergent EF-Tu species in Streptomyces coelicolor A3(2) and Streptomyces ramocissimus.</title>
        <authorList>
            <person name="Hoogvliet G."/>
            <person name="van Wezel G.P."/>
            <person name="Kraal B."/>
        </authorList>
    </citation>
    <scope>NUCLEOTIDE SEQUENCE [GENOMIC DNA]</scope>
    <source>
        <strain>ATCC BAA-471 / A3(2) / M145</strain>
    </source>
</reference>
<reference key="2">
    <citation type="submission" date="1999-03" db="EMBL/GenBank/DDBJ databases">
        <authorList>
            <person name="Hoogvliet G."/>
            <person name="van Wezel G.P."/>
            <person name="Kraal B."/>
        </authorList>
    </citation>
    <scope>SEQUENCE REVISION</scope>
</reference>
<reference key="3">
    <citation type="journal article" date="2002" name="Nature">
        <title>Complete genome sequence of the model actinomycete Streptomyces coelicolor A3(2).</title>
        <authorList>
            <person name="Bentley S.D."/>
            <person name="Chater K.F."/>
            <person name="Cerdeno-Tarraga A.-M."/>
            <person name="Challis G.L."/>
            <person name="Thomson N.R."/>
            <person name="James K.D."/>
            <person name="Harris D.E."/>
            <person name="Quail M.A."/>
            <person name="Kieser H."/>
            <person name="Harper D."/>
            <person name="Bateman A."/>
            <person name="Brown S."/>
            <person name="Chandra G."/>
            <person name="Chen C.W."/>
            <person name="Collins M."/>
            <person name="Cronin A."/>
            <person name="Fraser A."/>
            <person name="Goble A."/>
            <person name="Hidalgo J."/>
            <person name="Hornsby T."/>
            <person name="Howarth S."/>
            <person name="Huang C.-H."/>
            <person name="Kieser T."/>
            <person name="Larke L."/>
            <person name="Murphy L.D."/>
            <person name="Oliver K."/>
            <person name="O'Neil S."/>
            <person name="Rabbinowitsch E."/>
            <person name="Rajandream M.A."/>
            <person name="Rutherford K.M."/>
            <person name="Rutter S."/>
            <person name="Seeger K."/>
            <person name="Saunders D."/>
            <person name="Sharp S."/>
            <person name="Squares R."/>
            <person name="Squares S."/>
            <person name="Taylor K."/>
            <person name="Warren T."/>
            <person name="Wietzorrek A."/>
            <person name="Woodward J.R."/>
            <person name="Barrell B.G."/>
            <person name="Parkhill J."/>
            <person name="Hopwood D.A."/>
        </authorList>
    </citation>
    <scope>NUCLEOTIDE SEQUENCE [LARGE SCALE GENOMIC DNA]</scope>
    <source>
        <strain>ATCC BAA-471 / A3(2) / M145</strain>
    </source>
</reference>
<dbReference type="EMBL" id="AF034101">
    <property type="protein sequence ID" value="AAC00176.2"/>
    <property type="molecule type" value="Genomic_DNA"/>
</dbReference>
<dbReference type="EMBL" id="AL939124">
    <property type="protein sequence ID" value="CAA19417.1"/>
    <property type="molecule type" value="Genomic_DNA"/>
</dbReference>
<dbReference type="PIR" id="T34810">
    <property type="entry name" value="T34810"/>
</dbReference>
<dbReference type="RefSeq" id="NP_629759.1">
    <property type="nucleotide sequence ID" value="NC_003888.3"/>
</dbReference>
<dbReference type="RefSeq" id="WP_003973385.1">
    <property type="nucleotide sequence ID" value="NZ_VNID01000034.1"/>
</dbReference>
<dbReference type="SMR" id="O31213"/>
<dbReference type="FunCoup" id="O31213">
    <property type="interactions" value="460"/>
</dbReference>
<dbReference type="STRING" id="100226.gene:17763283"/>
<dbReference type="PaxDb" id="100226-SCO5625"/>
<dbReference type="GeneID" id="96655115"/>
<dbReference type="KEGG" id="sco:SCO5625"/>
<dbReference type="PATRIC" id="fig|100226.15.peg.5714"/>
<dbReference type="eggNOG" id="COG0264">
    <property type="taxonomic scope" value="Bacteria"/>
</dbReference>
<dbReference type="HOGENOM" id="CLU_047155_0_0_11"/>
<dbReference type="InParanoid" id="O31213"/>
<dbReference type="OrthoDB" id="9808348at2"/>
<dbReference type="PhylomeDB" id="O31213"/>
<dbReference type="Proteomes" id="UP000001973">
    <property type="component" value="Chromosome"/>
</dbReference>
<dbReference type="GO" id="GO:0005737">
    <property type="term" value="C:cytoplasm"/>
    <property type="evidence" value="ECO:0007669"/>
    <property type="project" value="UniProtKB-SubCell"/>
</dbReference>
<dbReference type="GO" id="GO:0003746">
    <property type="term" value="F:translation elongation factor activity"/>
    <property type="evidence" value="ECO:0000318"/>
    <property type="project" value="GO_Central"/>
</dbReference>
<dbReference type="GO" id="GO:0006414">
    <property type="term" value="P:translational elongation"/>
    <property type="evidence" value="ECO:0000318"/>
    <property type="project" value="GO_Central"/>
</dbReference>
<dbReference type="CDD" id="cd14275">
    <property type="entry name" value="UBA_EF-Ts"/>
    <property type="match status" value="1"/>
</dbReference>
<dbReference type="FunFam" id="1.10.286.20:FF:000001">
    <property type="entry name" value="Elongation factor Ts"/>
    <property type="match status" value="1"/>
</dbReference>
<dbReference type="FunFam" id="1.10.8.10:FF:000001">
    <property type="entry name" value="Elongation factor Ts"/>
    <property type="match status" value="1"/>
</dbReference>
<dbReference type="FunFam" id="3.30.479.20:FF:000010">
    <property type="entry name" value="Elongation factor Ts"/>
    <property type="match status" value="1"/>
</dbReference>
<dbReference type="Gene3D" id="1.10.286.20">
    <property type="match status" value="1"/>
</dbReference>
<dbReference type="Gene3D" id="1.10.8.10">
    <property type="entry name" value="DNA helicase RuvA subunit, C-terminal domain"/>
    <property type="match status" value="1"/>
</dbReference>
<dbReference type="Gene3D" id="3.30.479.20">
    <property type="entry name" value="Elongation factor Ts, dimerisation domain"/>
    <property type="match status" value="2"/>
</dbReference>
<dbReference type="HAMAP" id="MF_00050">
    <property type="entry name" value="EF_Ts"/>
    <property type="match status" value="1"/>
</dbReference>
<dbReference type="InterPro" id="IPR036402">
    <property type="entry name" value="EF-Ts_dimer_sf"/>
</dbReference>
<dbReference type="InterPro" id="IPR001816">
    <property type="entry name" value="Transl_elong_EFTs/EF1B"/>
</dbReference>
<dbReference type="InterPro" id="IPR014039">
    <property type="entry name" value="Transl_elong_EFTs/EF1B_dimer"/>
</dbReference>
<dbReference type="InterPro" id="IPR018101">
    <property type="entry name" value="Transl_elong_Ts_CS"/>
</dbReference>
<dbReference type="InterPro" id="IPR009060">
    <property type="entry name" value="UBA-like_sf"/>
</dbReference>
<dbReference type="NCBIfam" id="TIGR00116">
    <property type="entry name" value="tsf"/>
    <property type="match status" value="1"/>
</dbReference>
<dbReference type="PANTHER" id="PTHR11741">
    <property type="entry name" value="ELONGATION FACTOR TS"/>
    <property type="match status" value="1"/>
</dbReference>
<dbReference type="PANTHER" id="PTHR11741:SF0">
    <property type="entry name" value="ELONGATION FACTOR TS, MITOCHONDRIAL"/>
    <property type="match status" value="1"/>
</dbReference>
<dbReference type="Pfam" id="PF00889">
    <property type="entry name" value="EF_TS"/>
    <property type="match status" value="1"/>
</dbReference>
<dbReference type="SUPFAM" id="SSF54713">
    <property type="entry name" value="Elongation factor Ts (EF-Ts), dimerisation domain"/>
    <property type="match status" value="2"/>
</dbReference>
<dbReference type="SUPFAM" id="SSF46934">
    <property type="entry name" value="UBA-like"/>
    <property type="match status" value="1"/>
</dbReference>
<dbReference type="PROSITE" id="PS01126">
    <property type="entry name" value="EF_TS_1"/>
    <property type="match status" value="1"/>
</dbReference>
<dbReference type="PROSITE" id="PS01127">
    <property type="entry name" value="EF_TS_2"/>
    <property type="match status" value="1"/>
</dbReference>
<gene>
    <name type="primary">tsf</name>
    <name type="ordered locus">SCO5625</name>
    <name type="ORF">SC2E1.42</name>
</gene>
<protein>
    <recommendedName>
        <fullName>Elongation factor Ts</fullName>
        <shortName>EF-Ts</shortName>
    </recommendedName>
</protein>
<comment type="function">
    <text evidence="1">Associates with the EF-Tu.GDP complex and induces the exchange of GDP to GTP. It remains bound to the aminoacyl-tRNA.EF-Tu.GTP complex up to the GTP hydrolysis stage on the ribosome (By similarity).</text>
</comment>
<comment type="subcellular location">
    <subcellularLocation>
        <location evidence="1">Cytoplasm</location>
    </subcellularLocation>
</comment>
<comment type="similarity">
    <text evidence="2">Belongs to the EF-Ts family.</text>
</comment>
<evidence type="ECO:0000250" key="1"/>
<evidence type="ECO:0000305" key="2"/>
<keyword id="KW-0963">Cytoplasm</keyword>
<keyword id="KW-0251">Elongation factor</keyword>
<keyword id="KW-0648">Protein biosynthesis</keyword>
<keyword id="KW-1185">Reference proteome</keyword>
<sequence>MANYTAADVKKLRELTGAGMMDCKKALDEAEGNVEKAVEALRIKGQKGVAKREGRSAENGAVVSIIADDNTSGVLVELKCETDFVAKGEKFQNVATAIAEHVAKAAPADLEALLASEIEPGKTVQAYVDEANANLGEKIVLDRFAQFSGGFVTAYMHRTMPDLPPQIGVLVELDKPNAEIAKGVAQHIAAFAPKYLSKEDVPAEVVESERRVAEETTRAEGKPEAALPKIVEGRLNGFFKDATLLGQPYALDNKKSVQKVLEEAGVSLKRFSRIKVGI</sequence>
<feature type="chain" id="PRO_0000161206" description="Elongation factor Ts">
    <location>
        <begin position="1"/>
        <end position="278"/>
    </location>
</feature>
<feature type="region of interest" description="Involved in Mg(2+) ion dislocation from EF-Tu" evidence="1">
    <location>
        <begin position="82"/>
        <end position="85"/>
    </location>
</feature>
<feature type="sequence conflict" description="In Ref. 1." evidence="2" ref="1">
    <original>A</original>
    <variation>G</variation>
    <location>
        <position position="145"/>
    </location>
</feature>
<feature type="sequence conflict" description="In Ref. 1." evidence="2" ref="1">
    <original>GVA</original>
    <variation>AR</variation>
    <location>
        <begin position="183"/>
        <end position="185"/>
    </location>
</feature>